<sequence>MADPRRPARVTRYKPPTTESNPALEDPTPDYMNLLGMVFSMCGLMLKLKWCAWIAVYCSFISFANSRSSEDTKQMMSSFMLSISAVVMSYLQNPQPMSPPW</sequence>
<evidence type="ECO:0000250" key="1">
    <source>
        <dbReference type="UniProtKB" id="A0A8I3NQW8"/>
    </source>
</evidence>
<evidence type="ECO:0000250" key="2">
    <source>
        <dbReference type="UniProtKB" id="Q9Y284"/>
    </source>
</evidence>
<evidence type="ECO:0000256" key="3">
    <source>
        <dbReference type="SAM" id="MobiDB-lite"/>
    </source>
</evidence>
<evidence type="ECO:0000269" key="4">
    <source>
    </source>
</evidence>
<evidence type="ECO:0000305" key="5"/>
<proteinExistence type="evidence at transcript level"/>
<feature type="chain" id="PRO_0000415288" description="PAT complex subunit Asterix">
    <location>
        <begin position="1"/>
        <end position="101"/>
    </location>
</feature>
<feature type="topological domain" description="Cytoplasmic" evidence="1">
    <location>
        <begin position="1"/>
        <end position="27"/>
    </location>
</feature>
<feature type="transmembrane region" description="Helical" evidence="1">
    <location>
        <begin position="28"/>
        <end position="46"/>
    </location>
</feature>
<feature type="topological domain" description="Lumenal" evidence="1">
    <location>
        <position position="47"/>
    </location>
</feature>
<feature type="transmembrane region" description="Helical" evidence="1">
    <location>
        <begin position="48"/>
        <end position="65"/>
    </location>
</feature>
<feature type="topological domain" description="Cytoplasmic" evidence="1">
    <location>
        <begin position="66"/>
        <end position="69"/>
    </location>
</feature>
<feature type="transmembrane region" description="Helical" evidence="1">
    <location>
        <begin position="70"/>
        <end position="90"/>
    </location>
</feature>
<feature type="topological domain" description="Lumenal" evidence="1">
    <location>
        <begin position="91"/>
        <end position="101"/>
    </location>
</feature>
<feature type="region of interest" description="Disordered" evidence="3">
    <location>
        <begin position="1"/>
        <end position="26"/>
    </location>
</feature>
<organism>
    <name type="scientific">Gallus gallus</name>
    <name type="common">Chicken</name>
    <dbReference type="NCBI Taxonomy" id="9031"/>
    <lineage>
        <taxon>Eukaryota</taxon>
        <taxon>Metazoa</taxon>
        <taxon>Chordata</taxon>
        <taxon>Craniata</taxon>
        <taxon>Vertebrata</taxon>
        <taxon>Euteleostomi</taxon>
        <taxon>Archelosauria</taxon>
        <taxon>Archosauria</taxon>
        <taxon>Dinosauria</taxon>
        <taxon>Saurischia</taxon>
        <taxon>Theropoda</taxon>
        <taxon>Coelurosauria</taxon>
        <taxon>Aves</taxon>
        <taxon>Neognathae</taxon>
        <taxon>Galloanserae</taxon>
        <taxon>Galliformes</taxon>
        <taxon>Phasianidae</taxon>
        <taxon>Phasianinae</taxon>
        <taxon>Gallus</taxon>
    </lineage>
</organism>
<dbReference type="EMBL" id="HQ184923">
    <property type="protein sequence ID" value="AEJ33671.1"/>
    <property type="molecule type" value="mRNA"/>
</dbReference>
<dbReference type="RefSeq" id="NP_001292021.1">
    <property type="nucleotide sequence ID" value="NM_001305092.1"/>
</dbReference>
<dbReference type="SMR" id="F8RT80"/>
<dbReference type="FunCoup" id="F8RT80">
    <property type="interactions" value="1260"/>
</dbReference>
<dbReference type="PaxDb" id="9031-ENSGALP00000042682"/>
<dbReference type="GeneID" id="777443"/>
<dbReference type="CTD" id="51398"/>
<dbReference type="eggNOG" id="KOG3462">
    <property type="taxonomic scope" value="Eukaryota"/>
</dbReference>
<dbReference type="HOGENOM" id="CLU_128526_1_1_1"/>
<dbReference type="InParanoid" id="F8RT80"/>
<dbReference type="OrthoDB" id="284718at2759"/>
<dbReference type="PRO" id="PR:F8RT80"/>
<dbReference type="Proteomes" id="UP000000539">
    <property type="component" value="Unassembled WGS sequence"/>
</dbReference>
<dbReference type="GO" id="GO:0005789">
    <property type="term" value="C:endoplasmic reticulum membrane"/>
    <property type="evidence" value="ECO:0000250"/>
    <property type="project" value="UniProtKB"/>
</dbReference>
<dbReference type="GO" id="GO:0160064">
    <property type="term" value="C:multi-pass translocon complex"/>
    <property type="evidence" value="ECO:0000250"/>
    <property type="project" value="UniProtKB"/>
</dbReference>
<dbReference type="GO" id="GO:0044183">
    <property type="term" value="F:protein folding chaperone"/>
    <property type="evidence" value="ECO:0000250"/>
    <property type="project" value="UniProtKB"/>
</dbReference>
<dbReference type="GO" id="GO:0160063">
    <property type="term" value="P:multi-pass transmembrane protein insertion into ER membrane"/>
    <property type="evidence" value="ECO:0000250"/>
    <property type="project" value="UniProtKB"/>
</dbReference>
<dbReference type="GO" id="GO:0045048">
    <property type="term" value="P:protein insertion into ER membrane"/>
    <property type="evidence" value="ECO:0000250"/>
    <property type="project" value="UniProtKB"/>
</dbReference>
<dbReference type="InterPro" id="IPR005351">
    <property type="entry name" value="ASTER"/>
</dbReference>
<dbReference type="PANTHER" id="PTHR13193">
    <property type="entry name" value="CGI-140"/>
    <property type="match status" value="1"/>
</dbReference>
<dbReference type="PANTHER" id="PTHR13193:SF0">
    <property type="entry name" value="PAT COMPLEX SUBUNIT ASTERIX"/>
    <property type="match status" value="1"/>
</dbReference>
<dbReference type="Pfam" id="PF03669">
    <property type="entry name" value="ASTER"/>
    <property type="match status" value="1"/>
</dbReference>
<protein>
    <recommendedName>
        <fullName evidence="2">PAT complex subunit Asterix</fullName>
    </recommendedName>
    <alternativeName>
        <fullName>Protein WDR83OS homolog</fullName>
    </alternativeName>
    <alternativeName>
        <fullName evidence="2">Protein associated with the ER translocon of 10kDa</fullName>
        <shortName evidence="2">PAT-10</shortName>
        <shortName evidence="2">PAT10</shortName>
    </alternativeName>
</protein>
<accession>F8RT80</accession>
<gene>
    <name type="primary">WDR83OS</name>
</gene>
<name>ASTER_CHICK</name>
<keyword id="KW-0143">Chaperone</keyword>
<keyword id="KW-0256">Endoplasmic reticulum</keyword>
<keyword id="KW-0472">Membrane</keyword>
<keyword id="KW-1185">Reference proteome</keyword>
<keyword id="KW-0812">Transmembrane</keyword>
<keyword id="KW-1133">Transmembrane helix</keyword>
<comment type="function">
    <text evidence="2">Component of the multi-pass translocon (MPT) complex that mediates insertion of multi-pass membrane proteins into the lipid bilayer of membranes (By similarity). The MPT complex takes over after the SEC61 complex: following membrane insertion of the first few transmembrane segments of proteins by the SEC61 complex, the MPT complex occludes the lateral gate of the SEC61 complex to promote insertion of subsequent transmembrane regions (By similarity).</text>
</comment>
<comment type="subunit">
    <text evidence="2">Component of the multi-pass translocon (MPT) complex.</text>
</comment>
<comment type="subcellular location">
    <subcellularLocation>
        <location evidence="2">Endoplasmic reticulum membrane</location>
        <topology evidence="2">Multi-pass membrane protein</topology>
    </subcellularLocation>
</comment>
<comment type="developmental stage">
    <text evidence="4">Expressed in the early neural plate of embryos. Expressed in the hypoblast and Koller's sickle at pre-primitive streak stages. At stage 4, expression is detected in the node, the lips of the streak and the epiblast in the middle of the area pellucida. By the start of neurulation, expression becomes progressively concentrated in the neural plate, neural tube and sensory placodes including lens, otic and olfactory placodes. Expressed in the notochord and the sensory placodes at stage 16. Expressed in somites and persists in the myotome at later stages.</text>
</comment>
<comment type="induction">
    <text evidence="4">Up-regulated by FGF.</text>
</comment>
<comment type="similarity">
    <text evidence="5">Belongs to the Asterix family.</text>
</comment>
<reference key="1">
    <citation type="journal article" date="2011" name="PLoS ONE">
        <title>Distinct steps of neural induction revealed by Asterix, Obelix and TrkC, genes induced by different signals from the organizer.</title>
        <authorList>
            <person name="Pinho S."/>
            <person name="Simonsson P.R."/>
            <person name="Trevers K.E."/>
            <person name="Stower M.J."/>
            <person name="Sherlock W.T."/>
            <person name="Khan M."/>
            <person name="Streit A."/>
            <person name="Sheng G."/>
            <person name="Stern C.D."/>
        </authorList>
    </citation>
    <scope>NUCLEOTIDE SEQUENCE [MRNA]</scope>
    <scope>INDUCTION</scope>
    <scope>DEVELOPMENTAL STAGE</scope>
</reference>